<gene>
    <name evidence="1" type="primary">yfiC</name>
    <name type="ordered locus">EcHS_A2731</name>
</gene>
<evidence type="ECO:0000255" key="1">
    <source>
        <dbReference type="HAMAP-Rule" id="MF_01872"/>
    </source>
</evidence>
<protein>
    <recommendedName>
        <fullName evidence="1">tRNA1(Val) (adenine(37)-N6)-methyltransferase</fullName>
        <ecNumber evidence="1">2.1.1.223</ecNumber>
    </recommendedName>
    <alternativeName>
        <fullName evidence="1">tRNA m6A37 methyltransferase</fullName>
    </alternativeName>
</protein>
<organism>
    <name type="scientific">Escherichia coli O9:H4 (strain HS)</name>
    <dbReference type="NCBI Taxonomy" id="331112"/>
    <lineage>
        <taxon>Bacteria</taxon>
        <taxon>Pseudomonadati</taxon>
        <taxon>Pseudomonadota</taxon>
        <taxon>Gammaproteobacteria</taxon>
        <taxon>Enterobacterales</taxon>
        <taxon>Enterobacteriaceae</taxon>
        <taxon>Escherichia</taxon>
    </lineage>
</organism>
<name>TRMN6_ECOHS</name>
<dbReference type="EC" id="2.1.1.223" evidence="1"/>
<dbReference type="EMBL" id="CP000802">
    <property type="protein sequence ID" value="ABV06990.1"/>
    <property type="molecule type" value="Genomic_DNA"/>
</dbReference>
<dbReference type="SMR" id="A8A386"/>
<dbReference type="KEGG" id="ecx:EcHS_A2731"/>
<dbReference type="HOGENOM" id="CLU_061983_0_0_6"/>
<dbReference type="GO" id="GO:0005737">
    <property type="term" value="C:cytoplasm"/>
    <property type="evidence" value="ECO:0007669"/>
    <property type="project" value="UniProtKB-SubCell"/>
</dbReference>
<dbReference type="GO" id="GO:0003676">
    <property type="term" value="F:nucleic acid binding"/>
    <property type="evidence" value="ECO:0007669"/>
    <property type="project" value="InterPro"/>
</dbReference>
<dbReference type="GO" id="GO:0016430">
    <property type="term" value="F:tRNA (adenine-N6)-methyltransferase activity"/>
    <property type="evidence" value="ECO:0007669"/>
    <property type="project" value="UniProtKB-UniRule"/>
</dbReference>
<dbReference type="GO" id="GO:0032259">
    <property type="term" value="P:methylation"/>
    <property type="evidence" value="ECO:0007669"/>
    <property type="project" value="UniProtKB-KW"/>
</dbReference>
<dbReference type="GO" id="GO:0008033">
    <property type="term" value="P:tRNA processing"/>
    <property type="evidence" value="ECO:0007669"/>
    <property type="project" value="UniProtKB-UniRule"/>
</dbReference>
<dbReference type="CDD" id="cd02440">
    <property type="entry name" value="AdoMet_MTases"/>
    <property type="match status" value="1"/>
</dbReference>
<dbReference type="FunFam" id="3.40.50.150:FF:000087">
    <property type="entry name" value="tRNA1(Val) (adenine(37)-N6)-methyltransferase"/>
    <property type="match status" value="1"/>
</dbReference>
<dbReference type="Gene3D" id="3.40.50.150">
    <property type="entry name" value="Vaccinia Virus protein VP39"/>
    <property type="match status" value="1"/>
</dbReference>
<dbReference type="HAMAP" id="MF_01872">
    <property type="entry name" value="tRNA_methyltr_YfiC"/>
    <property type="match status" value="1"/>
</dbReference>
<dbReference type="InterPro" id="IPR002052">
    <property type="entry name" value="DNA_methylase_N6_adenine_CS"/>
</dbReference>
<dbReference type="InterPro" id="IPR029063">
    <property type="entry name" value="SAM-dependent_MTases_sf"/>
</dbReference>
<dbReference type="InterPro" id="IPR007848">
    <property type="entry name" value="Small_mtfrase_dom"/>
</dbReference>
<dbReference type="InterPro" id="IPR050210">
    <property type="entry name" value="tRNA_Adenine-N(6)_MTase"/>
</dbReference>
<dbReference type="InterPro" id="IPR022882">
    <property type="entry name" value="tRNA_adenine-N6_MeTrfase"/>
</dbReference>
<dbReference type="NCBIfam" id="NF047853">
    <property type="entry name" value="tRm6a37MtseTrmN"/>
    <property type="match status" value="1"/>
</dbReference>
<dbReference type="PANTHER" id="PTHR47739">
    <property type="entry name" value="TRNA1(VAL) (ADENINE(37)-N6)-METHYLTRANSFERASE"/>
    <property type="match status" value="1"/>
</dbReference>
<dbReference type="PANTHER" id="PTHR47739:SF1">
    <property type="entry name" value="TRNA1(VAL) (ADENINE(37)-N6)-METHYLTRANSFERASE"/>
    <property type="match status" value="1"/>
</dbReference>
<dbReference type="Pfam" id="PF05175">
    <property type="entry name" value="MTS"/>
    <property type="match status" value="1"/>
</dbReference>
<dbReference type="SUPFAM" id="SSF53335">
    <property type="entry name" value="S-adenosyl-L-methionine-dependent methyltransferases"/>
    <property type="match status" value="1"/>
</dbReference>
<dbReference type="PROSITE" id="PS00092">
    <property type="entry name" value="N6_MTASE"/>
    <property type="match status" value="1"/>
</dbReference>
<comment type="function">
    <text evidence="1">Specifically methylates the adenine in position 37 of tRNA(1)(Val) (anticodon cmo5UAC).</text>
</comment>
<comment type="catalytic activity">
    <reaction evidence="1">
        <text>adenosine(37) in tRNA1(Val) + S-adenosyl-L-methionine = N(6)-methyladenosine(37) in tRNA1(Val) + S-adenosyl-L-homocysteine + H(+)</text>
        <dbReference type="Rhea" id="RHEA:43160"/>
        <dbReference type="Rhea" id="RHEA-COMP:10369"/>
        <dbReference type="Rhea" id="RHEA-COMP:10370"/>
        <dbReference type="ChEBI" id="CHEBI:15378"/>
        <dbReference type="ChEBI" id="CHEBI:57856"/>
        <dbReference type="ChEBI" id="CHEBI:59789"/>
        <dbReference type="ChEBI" id="CHEBI:74411"/>
        <dbReference type="ChEBI" id="CHEBI:74449"/>
        <dbReference type="EC" id="2.1.1.223"/>
    </reaction>
</comment>
<comment type="subcellular location">
    <subcellularLocation>
        <location evidence="1">Cytoplasm</location>
    </subcellularLocation>
</comment>
<comment type="similarity">
    <text evidence="1">Belongs to the methyltransferase superfamily. tRNA (adenine-N(6)-)-methyltransferase family.</text>
</comment>
<accession>A8A386</accession>
<proteinExistence type="inferred from homology"/>
<feature type="chain" id="PRO_0000387377" description="tRNA1(Val) (adenine(37)-N6)-methyltransferase">
    <location>
        <begin position="1"/>
        <end position="245"/>
    </location>
</feature>
<reference key="1">
    <citation type="journal article" date="2008" name="J. Bacteriol.">
        <title>The pangenome structure of Escherichia coli: comparative genomic analysis of E. coli commensal and pathogenic isolates.</title>
        <authorList>
            <person name="Rasko D.A."/>
            <person name="Rosovitz M.J."/>
            <person name="Myers G.S.A."/>
            <person name="Mongodin E.F."/>
            <person name="Fricke W.F."/>
            <person name="Gajer P."/>
            <person name="Crabtree J."/>
            <person name="Sebaihia M."/>
            <person name="Thomson N.R."/>
            <person name="Chaudhuri R."/>
            <person name="Henderson I.R."/>
            <person name="Sperandio V."/>
            <person name="Ravel J."/>
        </authorList>
    </citation>
    <scope>NUCLEOTIDE SEQUENCE [LARGE SCALE GENOMIC DNA]</scope>
    <source>
        <strain>HS</strain>
    </source>
</reference>
<keyword id="KW-0963">Cytoplasm</keyword>
<keyword id="KW-0489">Methyltransferase</keyword>
<keyword id="KW-0949">S-adenosyl-L-methionine</keyword>
<keyword id="KW-0808">Transferase</keyword>
<keyword id="KW-0819">tRNA processing</keyword>
<sequence>MSQSTSVLRRNGFTFKQFFVAHDRCAMKVGTDGILLGAWAPVAGVKRCLDIGAGSGLLALMLAQRTDDSVMIDAVELESEAAAQAQENINQSPWAERINVHTADIQQWITQQTVRFDLIISNPPYYQQGVECSTPQREQARYTTTLDHPSLLTCAAECITEEGFFCVVLPEQIGNGFTELALSMGWHLRLRTDVAENEARLPHRVLLAFSPQAGECFSDRLVIRGPDQNYSEAYTALTQAFYLFM</sequence>